<feature type="chain" id="PRO_1000097283" description="Lipoprotein signal peptidase">
    <location>
        <begin position="1"/>
        <end position="196"/>
    </location>
</feature>
<feature type="transmembrane region" description="Helical" evidence="1">
    <location>
        <begin position="40"/>
        <end position="60"/>
    </location>
</feature>
<feature type="transmembrane region" description="Helical" evidence="1">
    <location>
        <begin position="92"/>
        <end position="112"/>
    </location>
</feature>
<feature type="transmembrane region" description="Helical" evidence="1">
    <location>
        <begin position="118"/>
        <end position="138"/>
    </location>
</feature>
<feature type="transmembrane region" description="Helical" evidence="1">
    <location>
        <begin position="164"/>
        <end position="184"/>
    </location>
</feature>
<feature type="region of interest" description="Disordered" evidence="2">
    <location>
        <begin position="1"/>
        <end position="24"/>
    </location>
</feature>
<feature type="active site" evidence="1">
    <location>
        <position position="155"/>
    </location>
</feature>
<feature type="active site" evidence="1">
    <location>
        <position position="169"/>
    </location>
</feature>
<organism>
    <name type="scientific">Streptomyces griseus subsp. griseus (strain JCM 4626 / CBS 651.72 / NBRC 13350 / KCC S-0626 / ISP 5235)</name>
    <dbReference type="NCBI Taxonomy" id="455632"/>
    <lineage>
        <taxon>Bacteria</taxon>
        <taxon>Bacillati</taxon>
        <taxon>Actinomycetota</taxon>
        <taxon>Actinomycetes</taxon>
        <taxon>Kitasatosporales</taxon>
        <taxon>Streptomycetaceae</taxon>
        <taxon>Streptomyces</taxon>
    </lineage>
</organism>
<proteinExistence type="inferred from homology"/>
<reference key="1">
    <citation type="journal article" date="2008" name="J. Bacteriol.">
        <title>Genome sequence of the streptomycin-producing microorganism Streptomyces griseus IFO 13350.</title>
        <authorList>
            <person name="Ohnishi Y."/>
            <person name="Ishikawa J."/>
            <person name="Hara H."/>
            <person name="Suzuki H."/>
            <person name="Ikenoya M."/>
            <person name="Ikeda H."/>
            <person name="Yamashita A."/>
            <person name="Hattori M."/>
            <person name="Horinouchi S."/>
        </authorList>
    </citation>
    <scope>NUCLEOTIDE SEQUENCE [LARGE SCALE GENOMIC DNA]</scope>
    <source>
        <strain>JCM 4626 / CBS 651.72 / NBRC 13350 / KCC S-0626 / ISP 5235</strain>
    </source>
</reference>
<dbReference type="EC" id="3.4.23.36" evidence="1"/>
<dbReference type="EMBL" id="AP009493">
    <property type="protein sequence ID" value="BAG22260.1"/>
    <property type="molecule type" value="Genomic_DNA"/>
</dbReference>
<dbReference type="RefSeq" id="WP_003969717.1">
    <property type="nucleotide sequence ID" value="NC_010572.1"/>
</dbReference>
<dbReference type="SMR" id="B1W0K0"/>
<dbReference type="KEGG" id="sgr:SGR_5431"/>
<dbReference type="eggNOG" id="COG0597">
    <property type="taxonomic scope" value="Bacteria"/>
</dbReference>
<dbReference type="HOGENOM" id="CLU_083252_2_2_11"/>
<dbReference type="UniPathway" id="UPA00665"/>
<dbReference type="Proteomes" id="UP000001685">
    <property type="component" value="Chromosome"/>
</dbReference>
<dbReference type="GO" id="GO:0005886">
    <property type="term" value="C:plasma membrane"/>
    <property type="evidence" value="ECO:0007669"/>
    <property type="project" value="UniProtKB-SubCell"/>
</dbReference>
<dbReference type="GO" id="GO:0004190">
    <property type="term" value="F:aspartic-type endopeptidase activity"/>
    <property type="evidence" value="ECO:0007669"/>
    <property type="project" value="UniProtKB-UniRule"/>
</dbReference>
<dbReference type="GO" id="GO:0006508">
    <property type="term" value="P:proteolysis"/>
    <property type="evidence" value="ECO:0007669"/>
    <property type="project" value="UniProtKB-KW"/>
</dbReference>
<dbReference type="HAMAP" id="MF_00161">
    <property type="entry name" value="LspA"/>
    <property type="match status" value="1"/>
</dbReference>
<dbReference type="InterPro" id="IPR001872">
    <property type="entry name" value="Peptidase_A8"/>
</dbReference>
<dbReference type="NCBIfam" id="TIGR00077">
    <property type="entry name" value="lspA"/>
    <property type="match status" value="1"/>
</dbReference>
<dbReference type="PANTHER" id="PTHR33695">
    <property type="entry name" value="LIPOPROTEIN SIGNAL PEPTIDASE"/>
    <property type="match status" value="1"/>
</dbReference>
<dbReference type="PANTHER" id="PTHR33695:SF1">
    <property type="entry name" value="LIPOPROTEIN SIGNAL PEPTIDASE"/>
    <property type="match status" value="1"/>
</dbReference>
<dbReference type="Pfam" id="PF01252">
    <property type="entry name" value="Peptidase_A8"/>
    <property type="match status" value="1"/>
</dbReference>
<dbReference type="PRINTS" id="PR00781">
    <property type="entry name" value="LIPOSIGPTASE"/>
</dbReference>
<dbReference type="PROSITE" id="PS00855">
    <property type="entry name" value="SPASE_II"/>
    <property type="match status" value="1"/>
</dbReference>
<gene>
    <name evidence="1" type="primary">lspA</name>
    <name type="ordered locus">SGR_5431</name>
</gene>
<accession>B1W0K0</accession>
<evidence type="ECO:0000255" key="1">
    <source>
        <dbReference type="HAMAP-Rule" id="MF_00161"/>
    </source>
</evidence>
<evidence type="ECO:0000256" key="2">
    <source>
        <dbReference type="SAM" id="MobiDB-lite"/>
    </source>
</evidence>
<name>LSPA_STRGG</name>
<sequence length="196" mass="20563">MAEAERIIGMPENPDVDGTDEGGSTAADAAVNAGRGKRKILALLSVAVVAYLLDLGSKMLVVAKLEHQPPIDIIGDWLQFRAIRNPGAAFGIGEAFTVIFTIIATGVIVVIFRIARKLYSLPWAIALGLLLGGALGNLTDRIFRAPGVFEGAVVDFIAPKNSAVFNLADSAIVCGGILIVILSFKGLDPDGTVHKD</sequence>
<comment type="function">
    <text evidence="1">This protein specifically catalyzes the removal of signal peptides from prolipoproteins.</text>
</comment>
<comment type="catalytic activity">
    <reaction evidence="1">
        <text>Release of signal peptides from bacterial membrane prolipoproteins. Hydrolyzes -Xaa-Yaa-Zaa-|-(S,diacylglyceryl)Cys-, in which Xaa is hydrophobic (preferably Leu), and Yaa (Ala or Ser) and Zaa (Gly or Ala) have small, neutral side chains.</text>
        <dbReference type="EC" id="3.4.23.36"/>
    </reaction>
</comment>
<comment type="pathway">
    <text evidence="1">Protein modification; lipoprotein biosynthesis (signal peptide cleavage).</text>
</comment>
<comment type="subcellular location">
    <subcellularLocation>
        <location evidence="1">Cell membrane</location>
        <topology evidence="1">Multi-pass membrane protein</topology>
    </subcellularLocation>
</comment>
<comment type="similarity">
    <text evidence="1">Belongs to the peptidase A8 family.</text>
</comment>
<keyword id="KW-0064">Aspartyl protease</keyword>
<keyword id="KW-1003">Cell membrane</keyword>
<keyword id="KW-0378">Hydrolase</keyword>
<keyword id="KW-0472">Membrane</keyword>
<keyword id="KW-0645">Protease</keyword>
<keyword id="KW-0812">Transmembrane</keyword>
<keyword id="KW-1133">Transmembrane helix</keyword>
<protein>
    <recommendedName>
        <fullName evidence="1">Lipoprotein signal peptidase</fullName>
        <ecNumber evidence="1">3.4.23.36</ecNumber>
    </recommendedName>
    <alternativeName>
        <fullName evidence="1">Prolipoprotein signal peptidase</fullName>
    </alternativeName>
    <alternativeName>
        <fullName evidence="1">Signal peptidase II</fullName>
        <shortName evidence="1">SPase II</shortName>
    </alternativeName>
</protein>